<organism>
    <name type="scientific">Aquipseudomonas alcaligenes (strain ATCC 14909 / DSM 50342 / CCUG 1425 / JCM 20561 / NBRC 14159 / NCIMB 9945 / NCTC 10367 / 1577)</name>
    <name type="common">Pseudomonas alcaligenes</name>
    <dbReference type="NCBI Taxonomy" id="1215092"/>
    <lineage>
        <taxon>Bacteria</taxon>
        <taxon>Pseudomonadati</taxon>
        <taxon>Pseudomonadota</taxon>
        <taxon>Gammaproteobacteria</taxon>
        <taxon>Pseudomonadales</taxon>
        <taxon>Pseudomonadaceae</taxon>
        <taxon>Aquipseudomonas</taxon>
    </lineage>
</organism>
<dbReference type="EC" id="2.1.1.137" evidence="1"/>
<dbReference type="EMBL" id="BATI01000058">
    <property type="protein sequence ID" value="GAD64975.1"/>
    <property type="molecule type" value="Genomic_DNA"/>
</dbReference>
<dbReference type="RefSeq" id="WP_021703038.1">
    <property type="nucleotide sequence ID" value="NZ_BATI01000058.1"/>
</dbReference>
<dbReference type="SMR" id="U2ZU49"/>
<dbReference type="eggNOG" id="COG2226">
    <property type="taxonomic scope" value="Bacteria"/>
</dbReference>
<dbReference type="OrthoDB" id="9791837at2"/>
<dbReference type="BRENDA" id="2.1.1.137">
    <property type="organism ID" value="5088"/>
</dbReference>
<dbReference type="Proteomes" id="UP000016560">
    <property type="component" value="Unassembled WGS sequence"/>
</dbReference>
<dbReference type="GO" id="GO:0030791">
    <property type="term" value="F:arsenite methyltransferase activity"/>
    <property type="evidence" value="ECO:0007669"/>
    <property type="project" value="UniProtKB-EC"/>
</dbReference>
<dbReference type="GO" id="GO:0046685">
    <property type="term" value="P:response to arsenic-containing substance"/>
    <property type="evidence" value="ECO:0007669"/>
    <property type="project" value="UniProtKB-KW"/>
</dbReference>
<dbReference type="CDD" id="cd02440">
    <property type="entry name" value="AdoMet_MTases"/>
    <property type="match status" value="1"/>
</dbReference>
<dbReference type="Gene3D" id="3.40.5.100">
    <property type="match status" value="1"/>
</dbReference>
<dbReference type="Gene3D" id="3.40.50.150">
    <property type="entry name" value="Vaccinia Virus protein VP39"/>
    <property type="match status" value="1"/>
</dbReference>
<dbReference type="InterPro" id="IPR026669">
    <property type="entry name" value="Arsenite_MeTrfase-like"/>
</dbReference>
<dbReference type="InterPro" id="IPR025714">
    <property type="entry name" value="Methyltranfer_dom"/>
</dbReference>
<dbReference type="InterPro" id="IPR029063">
    <property type="entry name" value="SAM-dependent_MTases_sf"/>
</dbReference>
<dbReference type="PANTHER" id="PTHR43675">
    <property type="entry name" value="ARSENITE METHYLTRANSFERASE"/>
    <property type="match status" value="1"/>
</dbReference>
<dbReference type="PANTHER" id="PTHR43675:SF8">
    <property type="entry name" value="ARSENITE METHYLTRANSFERASE"/>
    <property type="match status" value="1"/>
</dbReference>
<dbReference type="Pfam" id="PF13847">
    <property type="entry name" value="Methyltransf_31"/>
    <property type="match status" value="1"/>
</dbReference>
<dbReference type="SUPFAM" id="SSF53335">
    <property type="entry name" value="S-adenosyl-L-methionine-dependent methyltransferases"/>
    <property type="match status" value="1"/>
</dbReference>
<gene>
    <name evidence="2" type="primary">arsM</name>
    <name evidence="5" type="ORF">PA6_058_00040</name>
</gene>
<feature type="chain" id="PRO_0000439594" description="Arsenite methyltransferase">
    <location>
        <begin position="1"/>
        <end position="346"/>
    </location>
</feature>
<protein>
    <recommendedName>
        <fullName evidence="3">Arsenite methyltransferase</fullName>
        <ecNumber evidence="1">2.1.1.137</ecNumber>
    </recommendedName>
</protein>
<accession>U2ZU49</accession>
<keyword id="KW-0059">Arsenical resistance</keyword>
<keyword id="KW-0949">S-adenosyl-L-methionine</keyword>
<keyword id="KW-0808">Transferase</keyword>
<comment type="function">
    <text evidence="1">Catalyzes the transfer of a methyl group from AdoMet to arsenite, producing methylated arsenicals. Involved in the conversion of As(III) to dimethylarsenate as the main product in the medium and also produces dimethylarsine and trimethylarsine gases. Reduces the arsenic toxicity in the cell and may contribute to the global arsenic cycling.</text>
</comment>
<comment type="catalytic activity">
    <reaction evidence="1">
        <text>arsenic triglutathione + [thioredoxin]-dithiol + S-adenosyl-L-methionine + 2 H2O = methylarsonous acid + [thioredoxin]-disulfide + 3 glutathione + S-adenosyl-L-homocysteine + H(+)</text>
        <dbReference type="Rhea" id="RHEA:69460"/>
        <dbReference type="Rhea" id="RHEA-COMP:10698"/>
        <dbReference type="Rhea" id="RHEA-COMP:10700"/>
        <dbReference type="ChEBI" id="CHEBI:15377"/>
        <dbReference type="ChEBI" id="CHEBI:15378"/>
        <dbReference type="ChEBI" id="CHEBI:17826"/>
        <dbReference type="ChEBI" id="CHEBI:29950"/>
        <dbReference type="ChEBI" id="CHEBI:50058"/>
        <dbReference type="ChEBI" id="CHEBI:57856"/>
        <dbReference type="ChEBI" id="CHEBI:57925"/>
        <dbReference type="ChEBI" id="CHEBI:59789"/>
        <dbReference type="ChEBI" id="CHEBI:183640"/>
        <dbReference type="EC" id="2.1.1.137"/>
    </reaction>
</comment>
<comment type="catalytic activity">
    <reaction evidence="1">
        <text>arsenic triglutathione + 2 [thioredoxin]-dithiol + 2 S-adenosyl-L-methionine + H2O = dimethylarsinous acid + 2 [thioredoxin]-disulfide + 3 glutathione + 2 S-adenosyl-L-homocysteine + 2 H(+)</text>
        <dbReference type="Rhea" id="RHEA:69464"/>
        <dbReference type="Rhea" id="RHEA-COMP:10698"/>
        <dbReference type="Rhea" id="RHEA-COMP:10700"/>
        <dbReference type="ChEBI" id="CHEBI:15377"/>
        <dbReference type="ChEBI" id="CHEBI:15378"/>
        <dbReference type="ChEBI" id="CHEBI:23808"/>
        <dbReference type="ChEBI" id="CHEBI:29950"/>
        <dbReference type="ChEBI" id="CHEBI:50058"/>
        <dbReference type="ChEBI" id="CHEBI:57856"/>
        <dbReference type="ChEBI" id="CHEBI:57925"/>
        <dbReference type="ChEBI" id="CHEBI:59789"/>
        <dbReference type="ChEBI" id="CHEBI:183640"/>
        <dbReference type="EC" id="2.1.1.137"/>
    </reaction>
</comment>
<comment type="catalytic activity">
    <reaction evidence="1">
        <text>arsenic triglutathione + 3 [thioredoxin]-dithiol + 3 S-adenosyl-L-methionine = trimethylarsine + 3 [thioredoxin]-disulfide + 3 glutathione + 3 S-adenosyl-L-homocysteine + 3 H(+)</text>
        <dbReference type="Rhea" id="RHEA:69432"/>
        <dbReference type="Rhea" id="RHEA-COMP:10698"/>
        <dbReference type="Rhea" id="RHEA-COMP:10700"/>
        <dbReference type="ChEBI" id="CHEBI:15378"/>
        <dbReference type="ChEBI" id="CHEBI:27130"/>
        <dbReference type="ChEBI" id="CHEBI:29950"/>
        <dbReference type="ChEBI" id="CHEBI:50058"/>
        <dbReference type="ChEBI" id="CHEBI:57856"/>
        <dbReference type="ChEBI" id="CHEBI:57925"/>
        <dbReference type="ChEBI" id="CHEBI:59789"/>
        <dbReference type="ChEBI" id="CHEBI:183640"/>
        <dbReference type="EC" id="2.1.1.137"/>
    </reaction>
</comment>
<comment type="biophysicochemical properties">
    <phDependence>
        <text evidence="1">Optimum pH is 7.5.</text>
    </phDependence>
</comment>
<comment type="induction">
    <text evidence="1">Up-regulated by As(III).</text>
</comment>
<comment type="disruption phenotype">
    <text evidence="1">Deletion mutant cannot methylate arsenic and becomes more sensitive to As(III).</text>
</comment>
<comment type="biotechnology">
    <text evidence="4">Could be exploited in bioremediation of arsenic-contaminated environments.</text>
</comment>
<comment type="similarity">
    <text evidence="3">Belongs to the methyltransferase superfamily. Arsenite methyltransferase family.</text>
</comment>
<reference key="1">
    <citation type="submission" date="2013-09" db="EMBL/GenBank/DDBJ databases">
        <title>Whole genome shotgun sequence of Pseudomonas alcaligenes NBRC 14159.</title>
        <authorList>
            <person name="Yoshida I."/>
            <person name="Hosoyama A."/>
            <person name="Tsuchikane K."/>
            <person name="Noguchi M."/>
            <person name="Hirakata S."/>
            <person name="Ando Y."/>
            <person name="Ohji S."/>
            <person name="Yamazoe A."/>
            <person name="Yamazaki S."/>
            <person name="Fujita N."/>
        </authorList>
    </citation>
    <scope>NUCLEOTIDE SEQUENCE [LARGE SCALE GENOMIC DNA]</scope>
    <source>
        <strain>ATCC 14909 / DSM 50342 / CCUG 1425 / JCM 20561 / NBRC 14159 / NCIMB 9945 / NCTC 10367 / 1577</strain>
    </source>
</reference>
<reference key="2">
    <citation type="journal article" date="2015" name="Appl. Environ. Microbiol.">
        <title>Arsenic methylation and volatilization by arsenite S-adenosylmethionine methyltransferase in Pseudomonas alcaligenes NBRC14159.</title>
        <authorList>
            <person name="Zhang J."/>
            <person name="Cao T."/>
            <person name="Tang Z."/>
            <person name="Shen Q."/>
            <person name="Rosen B.P."/>
            <person name="Zhao F.J."/>
        </authorList>
    </citation>
    <scope>FUNCTION</scope>
    <scope>CATALYTIC ACTIVITY</scope>
    <scope>BIOPHYSICOCHEMICAL PROPERTIES</scope>
    <scope>INDUCTION</scope>
    <scope>DISRUPTION PHENOTYPE</scope>
    <scope>BIOTECHNOLOGY</scope>
    <source>
        <strain>ATCC 14909 / DSM 50342 / CCUG 1425 / JCM 20561 / NBRC 14159 / NCIMB 9945 / NCTC 10367 / 1577</strain>
    </source>
</reference>
<proteinExistence type="evidence at protein level"/>
<sequence>MHESVQNYYGKVLQNSSDLKTSACCDASSMPAWLKPLLSQVHPEVSARYYGCGLVAPALLDGCQVLDLGSGSGRDCYVLAQLVGASGSVLGVDMTAEQLAVANAHLDYHAERFGFANVSFRHGYIEDLASLELADGSFDVIVSNCVINLSPDKDSVLREAYRLLKPGGELYFSDVYADRRLADELRQDEVLYGECLGGALYWNDFEHLARRHGFTDPRLVEDQPISITDSALAEKLGDARFYSATYRLFKLDGLEPACEDYGQAVIYRGSIPGAAHAFVLDKHHRIETGRVFPVCGNTWRMLQDTRFAPHFQFIGDFSRHFGLFEGCGGGLPYDRQAAVTAATSCC</sequence>
<evidence type="ECO:0000269" key="1">
    <source>
    </source>
</evidence>
<evidence type="ECO:0000303" key="2">
    <source>
    </source>
</evidence>
<evidence type="ECO:0000305" key="3"/>
<evidence type="ECO:0000305" key="4">
    <source>
    </source>
</evidence>
<evidence type="ECO:0000312" key="5">
    <source>
        <dbReference type="EMBL" id="GAD64975.1"/>
    </source>
</evidence>
<name>ARSM_AQUA1</name>